<organism>
    <name type="scientific">Geobacter sulfurreducens (strain ATCC 51573 / DSM 12127 / PCA)</name>
    <dbReference type="NCBI Taxonomy" id="243231"/>
    <lineage>
        <taxon>Bacteria</taxon>
        <taxon>Pseudomonadati</taxon>
        <taxon>Thermodesulfobacteriota</taxon>
        <taxon>Desulfuromonadia</taxon>
        <taxon>Geobacterales</taxon>
        <taxon>Geobacteraceae</taxon>
        <taxon>Geobacter</taxon>
    </lineage>
</organism>
<proteinExistence type="inferred from homology"/>
<feature type="chain" id="PRO_0000136167" description="Histidine--tRNA ligase">
    <location>
        <begin position="1"/>
        <end position="413"/>
    </location>
</feature>
<sequence length="413" mass="45997">MITGIKGFNDILPGEVERWQHIEATARRVFSLYGFSEIRIPILEKTELFRRSIGDTTDIVEKEMYSFVDKGENAVTMRPEGTASVMRSYIEHKLYAQDPVAKLYYMGPMFRYERPQKGRYRQFHQIGAEVTGVTDPKVDAQVLTMLCHYFAELGLTEPTLQINSLGCPECRPAYRQALIDFLRERLDSLCEDCKRRYQTNPLRALDCKSAHCKEATASAPAMLDSLCAGCDDHFTATRRHLERAGTTYSINNRMVRGLDYYTRTTFELVTGLLGAQSAVAAGGRYDGLISDLGGPAIPGIGFAMGVERIALLLGDQHFVGRPDLFIAALGEEAQDEAFRLMCGLQRNGVAVEMDYEGKSLKSQMRRSDKFNARFTLIIGGDELAIGAAVLKAMDTGVQVEVPLTPEEVAARIT</sequence>
<dbReference type="EC" id="6.1.1.21" evidence="1"/>
<dbReference type="EMBL" id="AE017180">
    <property type="protein sequence ID" value="AAR35037.1"/>
    <property type="molecule type" value="Genomic_DNA"/>
</dbReference>
<dbReference type="RefSeq" id="NP_952710.1">
    <property type="nucleotide sequence ID" value="NC_002939.5"/>
</dbReference>
<dbReference type="RefSeq" id="WP_010942303.1">
    <property type="nucleotide sequence ID" value="NC_002939.5"/>
</dbReference>
<dbReference type="SMR" id="P60915"/>
<dbReference type="FunCoup" id="P60915">
    <property type="interactions" value="524"/>
</dbReference>
<dbReference type="STRING" id="243231.GSU1659"/>
<dbReference type="EnsemblBacteria" id="AAR35037">
    <property type="protein sequence ID" value="AAR35037"/>
    <property type="gene ID" value="GSU1659"/>
</dbReference>
<dbReference type="KEGG" id="gsu:GSU1659"/>
<dbReference type="PATRIC" id="fig|243231.5.peg.1701"/>
<dbReference type="eggNOG" id="COG0124">
    <property type="taxonomic scope" value="Bacteria"/>
</dbReference>
<dbReference type="HOGENOM" id="CLU_025113_1_1_7"/>
<dbReference type="InParanoid" id="P60915"/>
<dbReference type="OrthoDB" id="9800814at2"/>
<dbReference type="Proteomes" id="UP000000577">
    <property type="component" value="Chromosome"/>
</dbReference>
<dbReference type="GO" id="GO:0005737">
    <property type="term" value="C:cytoplasm"/>
    <property type="evidence" value="ECO:0007669"/>
    <property type="project" value="UniProtKB-SubCell"/>
</dbReference>
<dbReference type="GO" id="GO:0005524">
    <property type="term" value="F:ATP binding"/>
    <property type="evidence" value="ECO:0007669"/>
    <property type="project" value="UniProtKB-UniRule"/>
</dbReference>
<dbReference type="GO" id="GO:0004821">
    <property type="term" value="F:histidine-tRNA ligase activity"/>
    <property type="evidence" value="ECO:0000318"/>
    <property type="project" value="GO_Central"/>
</dbReference>
<dbReference type="GO" id="GO:0006427">
    <property type="term" value="P:histidyl-tRNA aminoacylation"/>
    <property type="evidence" value="ECO:0000318"/>
    <property type="project" value="GO_Central"/>
</dbReference>
<dbReference type="CDD" id="cd00773">
    <property type="entry name" value="HisRS-like_core"/>
    <property type="match status" value="1"/>
</dbReference>
<dbReference type="CDD" id="cd00859">
    <property type="entry name" value="HisRS_anticodon"/>
    <property type="match status" value="1"/>
</dbReference>
<dbReference type="FunFam" id="3.30.930.10:FF:000005">
    <property type="entry name" value="Histidine--tRNA ligase"/>
    <property type="match status" value="1"/>
</dbReference>
<dbReference type="Gene3D" id="3.40.50.800">
    <property type="entry name" value="Anticodon-binding domain"/>
    <property type="match status" value="1"/>
</dbReference>
<dbReference type="Gene3D" id="3.30.930.10">
    <property type="entry name" value="Bira Bifunctional Protein, Domain 2"/>
    <property type="match status" value="1"/>
</dbReference>
<dbReference type="HAMAP" id="MF_00127">
    <property type="entry name" value="His_tRNA_synth"/>
    <property type="match status" value="1"/>
</dbReference>
<dbReference type="InterPro" id="IPR006195">
    <property type="entry name" value="aa-tRNA-synth_II"/>
</dbReference>
<dbReference type="InterPro" id="IPR045864">
    <property type="entry name" value="aa-tRNA-synth_II/BPL/LPL"/>
</dbReference>
<dbReference type="InterPro" id="IPR004154">
    <property type="entry name" value="Anticodon-bd"/>
</dbReference>
<dbReference type="InterPro" id="IPR036621">
    <property type="entry name" value="Anticodon-bd_dom_sf"/>
</dbReference>
<dbReference type="InterPro" id="IPR015807">
    <property type="entry name" value="His-tRNA-ligase"/>
</dbReference>
<dbReference type="InterPro" id="IPR041715">
    <property type="entry name" value="HisRS-like_core"/>
</dbReference>
<dbReference type="InterPro" id="IPR004516">
    <property type="entry name" value="HisRS/HisZ"/>
</dbReference>
<dbReference type="InterPro" id="IPR033656">
    <property type="entry name" value="HisRS_anticodon"/>
</dbReference>
<dbReference type="NCBIfam" id="TIGR00442">
    <property type="entry name" value="hisS"/>
    <property type="match status" value="1"/>
</dbReference>
<dbReference type="PANTHER" id="PTHR43707:SF1">
    <property type="entry name" value="HISTIDINE--TRNA LIGASE, MITOCHONDRIAL-RELATED"/>
    <property type="match status" value="1"/>
</dbReference>
<dbReference type="PANTHER" id="PTHR43707">
    <property type="entry name" value="HISTIDYL-TRNA SYNTHETASE"/>
    <property type="match status" value="1"/>
</dbReference>
<dbReference type="Pfam" id="PF03129">
    <property type="entry name" value="HGTP_anticodon"/>
    <property type="match status" value="1"/>
</dbReference>
<dbReference type="Pfam" id="PF13393">
    <property type="entry name" value="tRNA-synt_His"/>
    <property type="match status" value="1"/>
</dbReference>
<dbReference type="PIRSF" id="PIRSF001549">
    <property type="entry name" value="His-tRNA_synth"/>
    <property type="match status" value="1"/>
</dbReference>
<dbReference type="SUPFAM" id="SSF52954">
    <property type="entry name" value="Class II aaRS ABD-related"/>
    <property type="match status" value="1"/>
</dbReference>
<dbReference type="SUPFAM" id="SSF55681">
    <property type="entry name" value="Class II aaRS and biotin synthetases"/>
    <property type="match status" value="1"/>
</dbReference>
<dbReference type="PROSITE" id="PS50862">
    <property type="entry name" value="AA_TRNA_LIGASE_II"/>
    <property type="match status" value="1"/>
</dbReference>
<reference key="1">
    <citation type="journal article" date="2003" name="Science">
        <title>Genome of Geobacter sulfurreducens: metal reduction in subsurface environments.</title>
        <authorList>
            <person name="Methe B.A."/>
            <person name="Nelson K.E."/>
            <person name="Eisen J.A."/>
            <person name="Paulsen I.T."/>
            <person name="Nelson W.C."/>
            <person name="Heidelberg J.F."/>
            <person name="Wu D."/>
            <person name="Wu M."/>
            <person name="Ward N.L."/>
            <person name="Beanan M.J."/>
            <person name="Dodson R.J."/>
            <person name="Madupu R."/>
            <person name="Brinkac L.M."/>
            <person name="Daugherty S.C."/>
            <person name="DeBoy R.T."/>
            <person name="Durkin A.S."/>
            <person name="Gwinn M.L."/>
            <person name="Kolonay J.F."/>
            <person name="Sullivan S.A."/>
            <person name="Haft D.H."/>
            <person name="Selengut J."/>
            <person name="Davidsen T.M."/>
            <person name="Zafar N."/>
            <person name="White O."/>
            <person name="Tran B."/>
            <person name="Romero C."/>
            <person name="Forberger H.A."/>
            <person name="Weidman J.F."/>
            <person name="Khouri H.M."/>
            <person name="Feldblyum T.V."/>
            <person name="Utterback T.R."/>
            <person name="Van Aken S.E."/>
            <person name="Lovley D.R."/>
            <person name="Fraser C.M."/>
        </authorList>
    </citation>
    <scope>NUCLEOTIDE SEQUENCE [LARGE SCALE GENOMIC DNA]</scope>
    <source>
        <strain>ATCC 51573 / DSM 12127 / PCA</strain>
    </source>
</reference>
<accession>P60915</accession>
<protein>
    <recommendedName>
        <fullName evidence="1">Histidine--tRNA ligase</fullName>
        <ecNumber evidence="1">6.1.1.21</ecNumber>
    </recommendedName>
    <alternativeName>
        <fullName evidence="1">Histidyl-tRNA synthetase</fullName>
        <shortName evidence="1">HisRS</shortName>
    </alternativeName>
</protein>
<gene>
    <name evidence="1" type="primary">hisS</name>
    <name type="ordered locus">GSU1659</name>
</gene>
<evidence type="ECO:0000255" key="1">
    <source>
        <dbReference type="HAMAP-Rule" id="MF_00127"/>
    </source>
</evidence>
<comment type="catalytic activity">
    <reaction evidence="1">
        <text>tRNA(His) + L-histidine + ATP = L-histidyl-tRNA(His) + AMP + diphosphate + H(+)</text>
        <dbReference type="Rhea" id="RHEA:17313"/>
        <dbReference type="Rhea" id="RHEA-COMP:9665"/>
        <dbReference type="Rhea" id="RHEA-COMP:9689"/>
        <dbReference type="ChEBI" id="CHEBI:15378"/>
        <dbReference type="ChEBI" id="CHEBI:30616"/>
        <dbReference type="ChEBI" id="CHEBI:33019"/>
        <dbReference type="ChEBI" id="CHEBI:57595"/>
        <dbReference type="ChEBI" id="CHEBI:78442"/>
        <dbReference type="ChEBI" id="CHEBI:78527"/>
        <dbReference type="ChEBI" id="CHEBI:456215"/>
        <dbReference type="EC" id="6.1.1.21"/>
    </reaction>
</comment>
<comment type="subunit">
    <text evidence="1">Homodimer.</text>
</comment>
<comment type="subcellular location">
    <subcellularLocation>
        <location evidence="1">Cytoplasm</location>
    </subcellularLocation>
</comment>
<comment type="similarity">
    <text evidence="1">Belongs to the class-II aminoacyl-tRNA synthetase family.</text>
</comment>
<name>SYH_GEOSL</name>
<keyword id="KW-0030">Aminoacyl-tRNA synthetase</keyword>
<keyword id="KW-0067">ATP-binding</keyword>
<keyword id="KW-0963">Cytoplasm</keyword>
<keyword id="KW-0436">Ligase</keyword>
<keyword id="KW-0547">Nucleotide-binding</keyword>
<keyword id="KW-0648">Protein biosynthesis</keyword>
<keyword id="KW-1185">Reference proteome</keyword>